<sequence>MKTVTVKDLVIGTGAPKIIVSLMAKDIASVKSEALAYREADFDILEWRVDHYADLSNVESVIAAAKILRETMPEKPLLFTFRSAKEGGEQAISTEAYIALNRAAIDSGLVDMIDLELFTGDDQVKETVAYAHAHDVKVVMSNHDFHKTPEAEEIIARLRKMQSFDADIPKIALMPQSTSDVLTLLAATLEMQEQYADRPIITMSMAKTGVISRLAGEVFGSAATFGAVKKASAPGQISVNDLRTVLTILHQA</sequence>
<feature type="chain" id="PRO_1000043165" description="3-dehydroquinate dehydratase">
    <location>
        <begin position="1"/>
        <end position="252"/>
    </location>
</feature>
<feature type="active site" description="Proton donor/acceptor" evidence="1">
    <location>
        <position position="143"/>
    </location>
</feature>
<feature type="active site" description="Schiff-base intermediate with substrate" evidence="1">
    <location>
        <position position="170"/>
    </location>
</feature>
<feature type="binding site" evidence="1">
    <location>
        <position position="21"/>
    </location>
    <ligand>
        <name>3-dehydroquinate</name>
        <dbReference type="ChEBI" id="CHEBI:32364"/>
    </ligand>
</feature>
<feature type="binding site" evidence="1">
    <location>
        <begin position="46"/>
        <end position="48"/>
    </location>
    <ligand>
        <name>3-dehydroquinate</name>
        <dbReference type="ChEBI" id="CHEBI:32364"/>
    </ligand>
</feature>
<feature type="binding site" evidence="1">
    <location>
        <position position="82"/>
    </location>
    <ligand>
        <name>3-dehydroquinate</name>
        <dbReference type="ChEBI" id="CHEBI:32364"/>
    </ligand>
</feature>
<feature type="binding site" evidence="1">
    <location>
        <position position="213"/>
    </location>
    <ligand>
        <name>3-dehydroquinate</name>
        <dbReference type="ChEBI" id="CHEBI:32364"/>
    </ligand>
</feature>
<feature type="binding site" evidence="1">
    <location>
        <position position="232"/>
    </location>
    <ligand>
        <name>3-dehydroquinate</name>
        <dbReference type="ChEBI" id="CHEBI:32364"/>
    </ligand>
</feature>
<feature type="binding site" evidence="1">
    <location>
        <position position="236"/>
    </location>
    <ligand>
        <name>3-dehydroquinate</name>
        <dbReference type="ChEBI" id="CHEBI:32364"/>
    </ligand>
</feature>
<name>AROD_ECOUT</name>
<evidence type="ECO:0000255" key="1">
    <source>
        <dbReference type="HAMAP-Rule" id="MF_00214"/>
    </source>
</evidence>
<reference key="1">
    <citation type="journal article" date="2006" name="Proc. Natl. Acad. Sci. U.S.A.">
        <title>Identification of genes subject to positive selection in uropathogenic strains of Escherichia coli: a comparative genomics approach.</title>
        <authorList>
            <person name="Chen S.L."/>
            <person name="Hung C.-S."/>
            <person name="Xu J."/>
            <person name="Reigstad C.S."/>
            <person name="Magrini V."/>
            <person name="Sabo A."/>
            <person name="Blasiar D."/>
            <person name="Bieri T."/>
            <person name="Meyer R.R."/>
            <person name="Ozersky P."/>
            <person name="Armstrong J.R."/>
            <person name="Fulton R.S."/>
            <person name="Latreille J.P."/>
            <person name="Spieth J."/>
            <person name="Hooton T.M."/>
            <person name="Mardis E.R."/>
            <person name="Hultgren S.J."/>
            <person name="Gordon J.I."/>
        </authorList>
    </citation>
    <scope>NUCLEOTIDE SEQUENCE [LARGE SCALE GENOMIC DNA]</scope>
    <source>
        <strain>UTI89 / UPEC</strain>
    </source>
</reference>
<comment type="function">
    <text evidence="1">Involved in the third step of the chorismate pathway, which leads to the biosynthesis of aromatic amino acids. Catalyzes the cis-dehydration of 3-dehydroquinate (DHQ) and introduces the first double bond of the aromatic ring to yield 3-dehydroshikimate.</text>
</comment>
<comment type="catalytic activity">
    <reaction evidence="1">
        <text>3-dehydroquinate = 3-dehydroshikimate + H2O</text>
        <dbReference type="Rhea" id="RHEA:21096"/>
        <dbReference type="ChEBI" id="CHEBI:15377"/>
        <dbReference type="ChEBI" id="CHEBI:16630"/>
        <dbReference type="ChEBI" id="CHEBI:32364"/>
        <dbReference type="EC" id="4.2.1.10"/>
    </reaction>
</comment>
<comment type="pathway">
    <text evidence="1">Metabolic intermediate biosynthesis; chorismate biosynthesis; chorismate from D-erythrose 4-phosphate and phosphoenolpyruvate: step 3/7.</text>
</comment>
<comment type="subunit">
    <text evidence="1">Homodimer.</text>
</comment>
<comment type="similarity">
    <text evidence="1">Belongs to the type-I 3-dehydroquinase family.</text>
</comment>
<gene>
    <name evidence="1" type="primary">aroD</name>
    <name type="ordered locus">UTI89_C1885</name>
</gene>
<proteinExistence type="inferred from homology"/>
<organism>
    <name type="scientific">Escherichia coli (strain UTI89 / UPEC)</name>
    <dbReference type="NCBI Taxonomy" id="364106"/>
    <lineage>
        <taxon>Bacteria</taxon>
        <taxon>Pseudomonadati</taxon>
        <taxon>Pseudomonadota</taxon>
        <taxon>Gammaproteobacteria</taxon>
        <taxon>Enterobacterales</taxon>
        <taxon>Enterobacteriaceae</taxon>
        <taxon>Escherichia</taxon>
    </lineage>
</organism>
<keyword id="KW-0028">Amino-acid biosynthesis</keyword>
<keyword id="KW-0057">Aromatic amino acid biosynthesis</keyword>
<keyword id="KW-0456">Lyase</keyword>
<keyword id="KW-0704">Schiff base</keyword>
<protein>
    <recommendedName>
        <fullName evidence="1">3-dehydroquinate dehydratase</fullName>
        <shortName evidence="1">3-dehydroquinase</shortName>
        <ecNumber evidence="1">4.2.1.10</ecNumber>
    </recommendedName>
    <alternativeName>
        <fullName evidence="1">Type I DHQase</fullName>
    </alternativeName>
    <alternativeName>
        <fullName evidence="1">Type I dehydroquinase</fullName>
        <shortName evidence="1">DHQ1</shortName>
    </alternativeName>
</protein>
<accession>Q1RBA3</accession>
<dbReference type="EC" id="4.2.1.10" evidence="1"/>
<dbReference type="EMBL" id="CP000243">
    <property type="protein sequence ID" value="ABE07361.1"/>
    <property type="molecule type" value="Genomic_DNA"/>
</dbReference>
<dbReference type="RefSeq" id="WP_000860194.1">
    <property type="nucleotide sequence ID" value="NZ_CP064825.1"/>
</dbReference>
<dbReference type="SMR" id="Q1RBA3"/>
<dbReference type="KEGG" id="eci:UTI89_C1885"/>
<dbReference type="HOGENOM" id="CLU_064444_0_0_6"/>
<dbReference type="UniPathway" id="UPA00053">
    <property type="reaction ID" value="UER00086"/>
</dbReference>
<dbReference type="Proteomes" id="UP000001952">
    <property type="component" value="Chromosome"/>
</dbReference>
<dbReference type="GO" id="GO:0003855">
    <property type="term" value="F:3-dehydroquinate dehydratase activity"/>
    <property type="evidence" value="ECO:0007669"/>
    <property type="project" value="UniProtKB-UniRule"/>
</dbReference>
<dbReference type="GO" id="GO:0046279">
    <property type="term" value="P:3,4-dihydroxybenzoate biosynthetic process"/>
    <property type="evidence" value="ECO:0007669"/>
    <property type="project" value="UniProtKB-ARBA"/>
</dbReference>
<dbReference type="GO" id="GO:0008652">
    <property type="term" value="P:amino acid biosynthetic process"/>
    <property type="evidence" value="ECO:0007669"/>
    <property type="project" value="UniProtKB-KW"/>
</dbReference>
<dbReference type="GO" id="GO:0009073">
    <property type="term" value="P:aromatic amino acid family biosynthetic process"/>
    <property type="evidence" value="ECO:0007669"/>
    <property type="project" value="UniProtKB-KW"/>
</dbReference>
<dbReference type="GO" id="GO:0009423">
    <property type="term" value="P:chorismate biosynthetic process"/>
    <property type="evidence" value="ECO:0007669"/>
    <property type="project" value="UniProtKB-UniRule"/>
</dbReference>
<dbReference type="CDD" id="cd00502">
    <property type="entry name" value="DHQase_I"/>
    <property type="match status" value="1"/>
</dbReference>
<dbReference type="FunFam" id="3.20.20.70:FF:000047">
    <property type="entry name" value="3-dehydroquinate dehydratase"/>
    <property type="match status" value="1"/>
</dbReference>
<dbReference type="Gene3D" id="3.20.20.70">
    <property type="entry name" value="Aldolase class I"/>
    <property type="match status" value="1"/>
</dbReference>
<dbReference type="HAMAP" id="MF_00214">
    <property type="entry name" value="AroD"/>
    <property type="match status" value="1"/>
</dbReference>
<dbReference type="InterPro" id="IPR018508">
    <property type="entry name" value="3-dehydroquinate_DH_AS"/>
</dbReference>
<dbReference type="InterPro" id="IPR013785">
    <property type="entry name" value="Aldolase_TIM"/>
</dbReference>
<dbReference type="InterPro" id="IPR001381">
    <property type="entry name" value="DHquinase_I"/>
</dbReference>
<dbReference type="InterPro" id="IPR050146">
    <property type="entry name" value="Type-I_3-dehydroquinase"/>
</dbReference>
<dbReference type="NCBIfam" id="TIGR01093">
    <property type="entry name" value="aroD"/>
    <property type="match status" value="1"/>
</dbReference>
<dbReference type="PANTHER" id="PTHR43699">
    <property type="entry name" value="3-DEHYDROQUINATE DEHYDRATASE"/>
    <property type="match status" value="1"/>
</dbReference>
<dbReference type="PANTHER" id="PTHR43699:SF1">
    <property type="entry name" value="3-DEHYDROQUINATE DEHYDRATASE"/>
    <property type="match status" value="1"/>
</dbReference>
<dbReference type="Pfam" id="PF01487">
    <property type="entry name" value="DHquinase_I"/>
    <property type="match status" value="1"/>
</dbReference>
<dbReference type="SUPFAM" id="SSF51569">
    <property type="entry name" value="Aldolase"/>
    <property type="match status" value="1"/>
</dbReference>
<dbReference type="PROSITE" id="PS01028">
    <property type="entry name" value="DEHYDROQUINASE_I"/>
    <property type="match status" value="1"/>
</dbReference>